<organism>
    <name type="scientific">Parabacteroides distasonis (strain ATCC 8503 / DSM 20701 / CIP 104284 / JCM 5825 / NCTC 11152)</name>
    <dbReference type="NCBI Taxonomy" id="435591"/>
    <lineage>
        <taxon>Bacteria</taxon>
        <taxon>Pseudomonadati</taxon>
        <taxon>Bacteroidota</taxon>
        <taxon>Bacteroidia</taxon>
        <taxon>Bacteroidales</taxon>
        <taxon>Tannerellaceae</taxon>
        <taxon>Parabacteroides</taxon>
    </lineage>
</organism>
<evidence type="ECO:0000255" key="1">
    <source>
        <dbReference type="HAMAP-Rule" id="MF_00036"/>
    </source>
</evidence>
<keyword id="KW-0030">Aminoacyl-tRNA synthetase</keyword>
<keyword id="KW-0067">ATP-binding</keyword>
<keyword id="KW-0963">Cytoplasm</keyword>
<keyword id="KW-0436">Ligase</keyword>
<keyword id="KW-0479">Metal-binding</keyword>
<keyword id="KW-0547">Nucleotide-binding</keyword>
<keyword id="KW-0648">Protein biosynthesis</keyword>
<keyword id="KW-1185">Reference proteome</keyword>
<keyword id="KW-0694">RNA-binding</keyword>
<keyword id="KW-0820">tRNA-binding</keyword>
<keyword id="KW-0862">Zinc</keyword>
<proteinExistence type="inferred from homology"/>
<gene>
    <name evidence="1" type="primary">alaS</name>
    <name type="ordered locus">BDI_2543</name>
</gene>
<feature type="chain" id="PRO_0000347711" description="Alanine--tRNA ligase">
    <location>
        <begin position="1"/>
        <end position="873"/>
    </location>
</feature>
<feature type="binding site" evidence="1">
    <location>
        <position position="563"/>
    </location>
    <ligand>
        <name>Zn(2+)</name>
        <dbReference type="ChEBI" id="CHEBI:29105"/>
    </ligand>
</feature>
<feature type="binding site" evidence="1">
    <location>
        <position position="567"/>
    </location>
    <ligand>
        <name>Zn(2+)</name>
        <dbReference type="ChEBI" id="CHEBI:29105"/>
    </ligand>
</feature>
<feature type="binding site" evidence="1">
    <location>
        <position position="665"/>
    </location>
    <ligand>
        <name>Zn(2+)</name>
        <dbReference type="ChEBI" id="CHEBI:29105"/>
    </ligand>
</feature>
<feature type="binding site" evidence="1">
    <location>
        <position position="669"/>
    </location>
    <ligand>
        <name>Zn(2+)</name>
        <dbReference type="ChEBI" id="CHEBI:29105"/>
    </ligand>
</feature>
<accession>A6LEZ8</accession>
<reference key="1">
    <citation type="journal article" date="2007" name="PLoS Biol.">
        <title>Evolution of symbiotic bacteria in the distal human intestine.</title>
        <authorList>
            <person name="Xu J."/>
            <person name="Mahowald M.A."/>
            <person name="Ley R.E."/>
            <person name="Lozupone C.A."/>
            <person name="Hamady M."/>
            <person name="Martens E.C."/>
            <person name="Henrissat B."/>
            <person name="Coutinho P.M."/>
            <person name="Minx P."/>
            <person name="Latreille P."/>
            <person name="Cordum H."/>
            <person name="Van Brunt A."/>
            <person name="Kim K."/>
            <person name="Fulton R.S."/>
            <person name="Fulton L.A."/>
            <person name="Clifton S.W."/>
            <person name="Wilson R.K."/>
            <person name="Knight R.D."/>
            <person name="Gordon J.I."/>
        </authorList>
    </citation>
    <scope>NUCLEOTIDE SEQUENCE [LARGE SCALE GENOMIC DNA]</scope>
    <source>
        <strain>ATCC 8503 / DSM 20701 / CIP 104284 / JCM 5825 / NCTC 11152</strain>
    </source>
</reference>
<protein>
    <recommendedName>
        <fullName evidence="1">Alanine--tRNA ligase</fullName>
        <ecNumber evidence="1">6.1.1.7</ecNumber>
    </recommendedName>
    <alternativeName>
        <fullName evidence="1">Alanyl-tRNA synthetase</fullName>
        <shortName evidence="1">AlaRS</shortName>
    </alternativeName>
</protein>
<sequence length="873" mass="97858">MLTAKEIRESFKQFFASKEHQIVPSAPMVVKGDPTLMFTNAGMNQFKDIILGNVPRKYPRVADSQKCLRVSGKHNDLEEVGHDTYHHTMFEMLGNWSFGDYFKKEAINWAWEYLVEVLKLNPERLYATVFEGSPAEGLDRDNEAAGYWEQYLPKDHILNGNKHDNFWEMGDTGPCGPCSEIHIDLRSDEERAAVSGADMVNKDHPQVIEIWNLVFMQFNRKADGSLEPLPAKVIDTGMGFERLCMALQGKTSNYDTDVFQPIIKVIAGMAGTTYGTDKQQDIAMRVIADHIRTIAFAITDGQLPSNAKAGYVIRRILRRAVRYGYTFLDRKEAFMYKLLPVLIETMGDAYPELIAQKTLIEKVIKEEEESFLRTLETGIRLLDKKMEETKAAGKTVLNGVDAFTLYDTYGFPLDLTELILRENGMEADIEEFNKAMQKQKERARNAAAIETGDWITLKDGECKFVGYDLFECEAEILRYRQIKQKNKVLYQIVLDQTPFYAEMGGQVGDTGWLIADDEKIDVIDTKRENNLPVHLVTKLPKDVTATFTAKINVKKRIQCECNHSATHLLHEALREVLGTHVEQKGSYVSPDSLRFDFSHFQKVTDEEIRKVEILVGEKIRANFPLEEHRNMPIAEAKALGAMALFGEKYGDEVRVVKYGSSVELCGGTHIPATGMIGSLRVIGESSIAAGVRRIEAVTAEGAEQFVYAQQDLIRELRALMNHMPNLAQAMKKSIEENAEMKKQIEDYIREKSMRLKEEIVAKASESNGIKVMQFVGKANADAMKNVAFQIKAETTDSFVFVAGIIDDNKCTLMLMLSDDLVKEGLHAGKIVKEAAKHIQGGGGGQPHFATAGGKNMEGLSIAVGAVKEAVGVQ</sequence>
<dbReference type="EC" id="6.1.1.7" evidence="1"/>
<dbReference type="EMBL" id="CP000140">
    <property type="protein sequence ID" value="ABR44262.1"/>
    <property type="molecule type" value="Genomic_DNA"/>
</dbReference>
<dbReference type="RefSeq" id="WP_005861281.1">
    <property type="nucleotide sequence ID" value="NZ_LR215978.1"/>
</dbReference>
<dbReference type="SMR" id="A6LEZ8"/>
<dbReference type="STRING" id="435591.BDI_2543"/>
<dbReference type="PaxDb" id="435591-BDI_2543"/>
<dbReference type="KEGG" id="pdi:BDI_2543"/>
<dbReference type="eggNOG" id="COG0013">
    <property type="taxonomic scope" value="Bacteria"/>
</dbReference>
<dbReference type="HOGENOM" id="CLU_004485_1_1_10"/>
<dbReference type="BioCyc" id="PDIS435591:G1G5A-2612-MONOMER"/>
<dbReference type="Proteomes" id="UP000000566">
    <property type="component" value="Chromosome"/>
</dbReference>
<dbReference type="GO" id="GO:0005737">
    <property type="term" value="C:cytoplasm"/>
    <property type="evidence" value="ECO:0007669"/>
    <property type="project" value="UniProtKB-SubCell"/>
</dbReference>
<dbReference type="GO" id="GO:0004813">
    <property type="term" value="F:alanine-tRNA ligase activity"/>
    <property type="evidence" value="ECO:0007669"/>
    <property type="project" value="UniProtKB-UniRule"/>
</dbReference>
<dbReference type="GO" id="GO:0002161">
    <property type="term" value="F:aminoacyl-tRNA deacylase activity"/>
    <property type="evidence" value="ECO:0007669"/>
    <property type="project" value="TreeGrafter"/>
</dbReference>
<dbReference type="GO" id="GO:0005524">
    <property type="term" value="F:ATP binding"/>
    <property type="evidence" value="ECO:0007669"/>
    <property type="project" value="UniProtKB-UniRule"/>
</dbReference>
<dbReference type="GO" id="GO:0000049">
    <property type="term" value="F:tRNA binding"/>
    <property type="evidence" value="ECO:0007669"/>
    <property type="project" value="UniProtKB-KW"/>
</dbReference>
<dbReference type="GO" id="GO:0008270">
    <property type="term" value="F:zinc ion binding"/>
    <property type="evidence" value="ECO:0007669"/>
    <property type="project" value="UniProtKB-UniRule"/>
</dbReference>
<dbReference type="GO" id="GO:0006419">
    <property type="term" value="P:alanyl-tRNA aminoacylation"/>
    <property type="evidence" value="ECO:0007669"/>
    <property type="project" value="UniProtKB-UniRule"/>
</dbReference>
<dbReference type="CDD" id="cd00673">
    <property type="entry name" value="AlaRS_core"/>
    <property type="match status" value="1"/>
</dbReference>
<dbReference type="FunFam" id="3.10.310.40:FF:000001">
    <property type="entry name" value="Alanine--tRNA ligase"/>
    <property type="match status" value="1"/>
</dbReference>
<dbReference type="FunFam" id="3.30.54.20:FF:000001">
    <property type="entry name" value="Alanine--tRNA ligase"/>
    <property type="match status" value="1"/>
</dbReference>
<dbReference type="FunFam" id="3.30.930.10:FF:000011">
    <property type="entry name" value="Alanine--tRNA ligase, cytoplasmic"/>
    <property type="match status" value="1"/>
</dbReference>
<dbReference type="FunFam" id="3.30.980.10:FF:000004">
    <property type="entry name" value="Alanine--tRNA ligase, cytoplasmic"/>
    <property type="match status" value="1"/>
</dbReference>
<dbReference type="Gene3D" id="2.40.30.130">
    <property type="match status" value="1"/>
</dbReference>
<dbReference type="Gene3D" id="3.10.310.40">
    <property type="match status" value="1"/>
</dbReference>
<dbReference type="Gene3D" id="3.30.54.20">
    <property type="match status" value="1"/>
</dbReference>
<dbReference type="Gene3D" id="3.30.930.10">
    <property type="entry name" value="Bira Bifunctional Protein, Domain 2"/>
    <property type="match status" value="1"/>
</dbReference>
<dbReference type="Gene3D" id="3.30.980.10">
    <property type="entry name" value="Threonyl-trna Synthetase, Chain A, domain 2"/>
    <property type="match status" value="1"/>
</dbReference>
<dbReference type="HAMAP" id="MF_00036_B">
    <property type="entry name" value="Ala_tRNA_synth_B"/>
    <property type="match status" value="1"/>
</dbReference>
<dbReference type="InterPro" id="IPR045864">
    <property type="entry name" value="aa-tRNA-synth_II/BPL/LPL"/>
</dbReference>
<dbReference type="InterPro" id="IPR002318">
    <property type="entry name" value="Ala-tRNA-lgiase_IIc"/>
</dbReference>
<dbReference type="InterPro" id="IPR018162">
    <property type="entry name" value="Ala-tRNA-ligase_IIc_anticod-bd"/>
</dbReference>
<dbReference type="InterPro" id="IPR018165">
    <property type="entry name" value="Ala-tRNA-synth_IIc_core"/>
</dbReference>
<dbReference type="InterPro" id="IPR018164">
    <property type="entry name" value="Ala-tRNA-synth_IIc_N"/>
</dbReference>
<dbReference type="InterPro" id="IPR050058">
    <property type="entry name" value="Ala-tRNA_ligase"/>
</dbReference>
<dbReference type="InterPro" id="IPR023033">
    <property type="entry name" value="Ala_tRNA_ligase_euk/bac"/>
</dbReference>
<dbReference type="InterPro" id="IPR003156">
    <property type="entry name" value="DHHA1_dom"/>
</dbReference>
<dbReference type="InterPro" id="IPR018163">
    <property type="entry name" value="Thr/Ala-tRNA-synth_IIc_edit"/>
</dbReference>
<dbReference type="InterPro" id="IPR009000">
    <property type="entry name" value="Transl_B-barrel_sf"/>
</dbReference>
<dbReference type="InterPro" id="IPR012947">
    <property type="entry name" value="tRNA_SAD"/>
</dbReference>
<dbReference type="NCBIfam" id="TIGR00344">
    <property type="entry name" value="alaS"/>
    <property type="match status" value="1"/>
</dbReference>
<dbReference type="PANTHER" id="PTHR11777:SF9">
    <property type="entry name" value="ALANINE--TRNA LIGASE, CYTOPLASMIC"/>
    <property type="match status" value="1"/>
</dbReference>
<dbReference type="PANTHER" id="PTHR11777">
    <property type="entry name" value="ALANYL-TRNA SYNTHETASE"/>
    <property type="match status" value="1"/>
</dbReference>
<dbReference type="Pfam" id="PF02272">
    <property type="entry name" value="DHHA1"/>
    <property type="match status" value="1"/>
</dbReference>
<dbReference type="Pfam" id="PF01411">
    <property type="entry name" value="tRNA-synt_2c"/>
    <property type="match status" value="1"/>
</dbReference>
<dbReference type="Pfam" id="PF07973">
    <property type="entry name" value="tRNA_SAD"/>
    <property type="match status" value="1"/>
</dbReference>
<dbReference type="PRINTS" id="PR00980">
    <property type="entry name" value="TRNASYNTHALA"/>
</dbReference>
<dbReference type="SMART" id="SM00863">
    <property type="entry name" value="tRNA_SAD"/>
    <property type="match status" value="1"/>
</dbReference>
<dbReference type="SUPFAM" id="SSF55681">
    <property type="entry name" value="Class II aaRS and biotin synthetases"/>
    <property type="match status" value="1"/>
</dbReference>
<dbReference type="SUPFAM" id="SSF101353">
    <property type="entry name" value="Putative anticodon-binding domain of alanyl-tRNA synthetase (AlaRS)"/>
    <property type="match status" value="1"/>
</dbReference>
<dbReference type="SUPFAM" id="SSF55186">
    <property type="entry name" value="ThrRS/AlaRS common domain"/>
    <property type="match status" value="1"/>
</dbReference>
<dbReference type="SUPFAM" id="SSF50447">
    <property type="entry name" value="Translation proteins"/>
    <property type="match status" value="1"/>
</dbReference>
<dbReference type="PROSITE" id="PS50860">
    <property type="entry name" value="AA_TRNA_LIGASE_II_ALA"/>
    <property type="match status" value="1"/>
</dbReference>
<name>SYA_PARD8</name>
<comment type="function">
    <text evidence="1">Catalyzes the attachment of alanine to tRNA(Ala) in a two-step reaction: alanine is first activated by ATP to form Ala-AMP and then transferred to the acceptor end of tRNA(Ala). Also edits incorrectly charged Ser-tRNA(Ala) and Gly-tRNA(Ala) via its editing domain.</text>
</comment>
<comment type="catalytic activity">
    <reaction evidence="1">
        <text>tRNA(Ala) + L-alanine + ATP = L-alanyl-tRNA(Ala) + AMP + diphosphate</text>
        <dbReference type="Rhea" id="RHEA:12540"/>
        <dbReference type="Rhea" id="RHEA-COMP:9657"/>
        <dbReference type="Rhea" id="RHEA-COMP:9923"/>
        <dbReference type="ChEBI" id="CHEBI:30616"/>
        <dbReference type="ChEBI" id="CHEBI:33019"/>
        <dbReference type="ChEBI" id="CHEBI:57972"/>
        <dbReference type="ChEBI" id="CHEBI:78442"/>
        <dbReference type="ChEBI" id="CHEBI:78497"/>
        <dbReference type="ChEBI" id="CHEBI:456215"/>
        <dbReference type="EC" id="6.1.1.7"/>
    </reaction>
</comment>
<comment type="cofactor">
    <cofactor evidence="1">
        <name>Zn(2+)</name>
        <dbReference type="ChEBI" id="CHEBI:29105"/>
    </cofactor>
    <text evidence="1">Binds 1 zinc ion per subunit.</text>
</comment>
<comment type="subcellular location">
    <subcellularLocation>
        <location evidence="1">Cytoplasm</location>
    </subcellularLocation>
</comment>
<comment type="domain">
    <text evidence="1">Consists of three domains; the N-terminal catalytic domain, the editing domain and the C-terminal C-Ala domain. The editing domain removes incorrectly charged amino acids, while the C-Ala domain, along with tRNA(Ala), serves as a bridge to cooperatively bring together the editing and aminoacylation centers thus stimulating deacylation of misacylated tRNAs.</text>
</comment>
<comment type="similarity">
    <text evidence="1">Belongs to the class-II aminoacyl-tRNA synthetase family.</text>
</comment>